<keyword id="KW-0963">Cytoplasm</keyword>
<keyword id="KW-0235">DNA replication</keyword>
<keyword id="KW-0236">DNA replication inhibitor</keyword>
<keyword id="KW-0479">Metal-binding</keyword>
<keyword id="KW-0862">Zinc</keyword>
<comment type="function">
    <text evidence="1">Involved in control of chromosome replication initiation. Inhibits the cooperative binding of DnaA to the oriC region, thus negatively regulating initiation of chromosome replication. Inhibits the ability of DnaA-ATP to form a helix on DNA; does not disassemble preformed DnaA-DNA helices. Decreases the residence time of DnaA on the chromosome at its binding sites (oriC, replication forks and promoter-binding sites). Tethers DnaA to the replication machinery via the DNA polymerase beta sliding clamp subunit (dnaN). Associates with oriC and other DnaA targets on the chromosome in a DnaA-dependent manner.</text>
</comment>
<comment type="cofactor">
    <cofactor evidence="1">
        <name>Zn(2+)</name>
        <dbReference type="ChEBI" id="CHEBI:29105"/>
    </cofactor>
    <text evidence="1">Binds 1 zinc ion per subunit.</text>
</comment>
<comment type="subunit">
    <text evidence="1">Homotetramer. Interacts with both DnaA and DnaN, acting as a bridge between these two proteins.</text>
</comment>
<comment type="subcellular location">
    <subcellularLocation>
        <location evidence="1">Cytoplasm</location>
        <location evidence="1">Nucleoid</location>
    </subcellularLocation>
    <text evidence="1">Localizes in tight foci, which correspond to the replisome at mid-cell throughout the cell cycle.</text>
</comment>
<comment type="similarity">
    <text evidence="1">Belongs to the YabA family.</text>
</comment>
<reference key="1">
    <citation type="journal article" date="2006" name="Proc. Natl. Acad. Sci. U.S.A.">
        <title>Molecular genetic anatomy of inter- and intraserotype variation in the human bacterial pathogen group A Streptococcus.</title>
        <authorList>
            <person name="Beres S.B."/>
            <person name="Richter E.W."/>
            <person name="Nagiec M.J."/>
            <person name="Sumby P."/>
            <person name="Porcella S.F."/>
            <person name="DeLeo F.R."/>
            <person name="Musser J.M."/>
        </authorList>
    </citation>
    <scope>NUCLEOTIDE SEQUENCE [LARGE SCALE GENOMIC DNA]</scope>
    <source>
        <strain>MGAS2096</strain>
    </source>
</reference>
<gene>
    <name evidence="1" type="primary">yabA</name>
    <name type="ordered locus">MGAS2096_Spy0354</name>
</gene>
<proteinExistence type="inferred from homology"/>
<name>YABA_STRPB</name>
<dbReference type="EMBL" id="CP000261">
    <property type="protein sequence ID" value="ABF35406.1"/>
    <property type="molecule type" value="Genomic_DNA"/>
</dbReference>
<dbReference type="SMR" id="Q1JDA2"/>
<dbReference type="KEGG" id="spj:MGAS2096_Spy0354"/>
<dbReference type="HOGENOM" id="CLU_157169_0_0_9"/>
<dbReference type="GO" id="GO:0009295">
    <property type="term" value="C:nucleoid"/>
    <property type="evidence" value="ECO:0007669"/>
    <property type="project" value="UniProtKB-SubCell"/>
</dbReference>
<dbReference type="GO" id="GO:0006260">
    <property type="term" value="P:DNA replication"/>
    <property type="evidence" value="ECO:0007669"/>
    <property type="project" value="UniProtKB-UniRule"/>
</dbReference>
<dbReference type="HAMAP" id="MF_01159">
    <property type="entry name" value="YabA"/>
    <property type="match status" value="1"/>
</dbReference>
<dbReference type="InterPro" id="IPR010377">
    <property type="entry name" value="YabA"/>
</dbReference>
<dbReference type="NCBIfam" id="NF009640">
    <property type="entry name" value="PRK13169.1-1"/>
    <property type="match status" value="1"/>
</dbReference>
<dbReference type="Pfam" id="PF06156">
    <property type="entry name" value="YabA"/>
    <property type="match status" value="1"/>
</dbReference>
<dbReference type="PIRSF" id="PIRSF021439">
    <property type="entry name" value="DUF972"/>
    <property type="match status" value="1"/>
</dbReference>
<feature type="chain" id="PRO_1000065587" description="Replication initiation control protein YabA">
    <location>
        <begin position="1"/>
        <end position="107"/>
    </location>
</feature>
<feature type="binding site" evidence="1">
    <location>
        <position position="81"/>
    </location>
    <ligand>
        <name>Zn(2+)</name>
        <dbReference type="ChEBI" id="CHEBI:29105"/>
    </ligand>
</feature>
<feature type="binding site" evidence="1">
    <location>
        <position position="83"/>
    </location>
    <ligand>
        <name>Zn(2+)</name>
        <dbReference type="ChEBI" id="CHEBI:29105"/>
    </ligand>
</feature>
<feature type="binding site" evidence="1">
    <location>
        <position position="97"/>
    </location>
    <ligand>
        <name>Zn(2+)</name>
        <dbReference type="ChEBI" id="CHEBI:29105"/>
    </ligand>
</feature>
<feature type="binding site" evidence="1">
    <location>
        <position position="100"/>
    </location>
    <ligand>
        <name>Zn(2+)</name>
        <dbReference type="ChEBI" id="CHEBI:29105"/>
    </ligand>
</feature>
<accession>Q1JDA2</accession>
<sequence length="107" mass="12797">MNKKELFDAFDGFSQNLMVTLAEIEAMKKQVQSLVEENTILRLENTKLRERLSHLEHETVAKNPSKQRKDHLEGIYDEGFHICNFFYGQRRENDEECMFCRELLDRK</sequence>
<evidence type="ECO:0000255" key="1">
    <source>
        <dbReference type="HAMAP-Rule" id="MF_01159"/>
    </source>
</evidence>
<organism>
    <name type="scientific">Streptococcus pyogenes serotype M12 (strain MGAS2096)</name>
    <dbReference type="NCBI Taxonomy" id="370553"/>
    <lineage>
        <taxon>Bacteria</taxon>
        <taxon>Bacillati</taxon>
        <taxon>Bacillota</taxon>
        <taxon>Bacilli</taxon>
        <taxon>Lactobacillales</taxon>
        <taxon>Streptococcaceae</taxon>
        <taxon>Streptococcus</taxon>
    </lineage>
</organism>
<protein>
    <recommendedName>
        <fullName evidence="1">Replication initiation control protein YabA</fullName>
    </recommendedName>
</protein>